<protein>
    <recommendedName>
        <fullName evidence="1">ATP synthase subunit delta</fullName>
    </recommendedName>
    <alternativeName>
        <fullName evidence="1">ATP synthase F(1) sector subunit delta</fullName>
    </alternativeName>
    <alternativeName>
        <fullName evidence="1">F-type ATPase subunit delta</fullName>
        <shortName evidence="1">F-ATPase subunit delta</shortName>
    </alternativeName>
</protein>
<comment type="function">
    <text evidence="1">F(1)F(0) ATP synthase produces ATP from ADP in the presence of a proton or sodium gradient. F-type ATPases consist of two structural domains, F(1) containing the extramembraneous catalytic core and F(0) containing the membrane proton channel, linked together by a central stalk and a peripheral stalk. During catalysis, ATP synthesis in the catalytic domain of F(1) is coupled via a rotary mechanism of the central stalk subunits to proton translocation.</text>
</comment>
<comment type="function">
    <text evidence="1">This protein is part of the stalk that links CF(0) to CF(1). It either transmits conformational changes from CF(0) to CF(1) or is implicated in proton conduction.</text>
</comment>
<comment type="subunit">
    <text evidence="1">F-type ATPases have 2 components, F(1) - the catalytic core - and F(0) - the membrane proton channel. F(1) has five subunits: alpha(3), beta(3), gamma(1), delta(1), epsilon(1). F(0) has three main subunits: a(1), b(2) and c(10-14). The alpha and beta chains form an alternating ring which encloses part of the gamma chain. F(1) is attached to F(0) by a central stalk formed by the gamma and epsilon chains, while a peripheral stalk is formed by the delta and b chains.</text>
</comment>
<comment type="subcellular location">
    <subcellularLocation>
        <location evidence="1">Cell inner membrane</location>
        <topology evidence="1">Peripheral membrane protein</topology>
    </subcellularLocation>
</comment>
<comment type="similarity">
    <text evidence="1">Belongs to the ATPase delta chain family.</text>
</comment>
<gene>
    <name evidence="1" type="primary">atpH</name>
    <name type="ordered locus">HY04AAS1_1015</name>
</gene>
<name>ATPD_HYDS0</name>
<proteinExistence type="inferred from homology"/>
<sequence length="182" mass="20850">MKVNKELARKLSKKIVFSVPKDKESLSAVSDFLGLLGVLYKKEPKFRDFVLSPFVSNEQKKLFIKSLIQKGNIPKEIEFFVDELIDLNLLRIVGEIKRLFDYESEKILSIYKGKLIFAKEPVKELVDEIIQRVEKVLNRKIEPEISVNEALIGGFELRLSGLVLDTSVRSVLQNLSNKVKSL</sequence>
<dbReference type="EMBL" id="CP001130">
    <property type="protein sequence ID" value="ACG57701.1"/>
    <property type="molecule type" value="Genomic_DNA"/>
</dbReference>
<dbReference type="RefSeq" id="WP_012514057.1">
    <property type="nucleotide sequence ID" value="NC_011126.1"/>
</dbReference>
<dbReference type="SMR" id="B4U990"/>
<dbReference type="STRING" id="380749.HY04AAS1_1015"/>
<dbReference type="KEGG" id="hya:HY04AAS1_1015"/>
<dbReference type="eggNOG" id="COG0712">
    <property type="taxonomic scope" value="Bacteria"/>
</dbReference>
<dbReference type="HOGENOM" id="CLU_085114_1_1_0"/>
<dbReference type="OrthoDB" id="9802471at2"/>
<dbReference type="GO" id="GO:0005886">
    <property type="term" value="C:plasma membrane"/>
    <property type="evidence" value="ECO:0007669"/>
    <property type="project" value="UniProtKB-SubCell"/>
</dbReference>
<dbReference type="GO" id="GO:0045259">
    <property type="term" value="C:proton-transporting ATP synthase complex"/>
    <property type="evidence" value="ECO:0007669"/>
    <property type="project" value="UniProtKB-KW"/>
</dbReference>
<dbReference type="GO" id="GO:0046933">
    <property type="term" value="F:proton-transporting ATP synthase activity, rotational mechanism"/>
    <property type="evidence" value="ECO:0007669"/>
    <property type="project" value="UniProtKB-UniRule"/>
</dbReference>
<dbReference type="Gene3D" id="1.10.520.20">
    <property type="entry name" value="N-terminal domain of the delta subunit of the F1F0-ATP synthase"/>
    <property type="match status" value="1"/>
</dbReference>
<dbReference type="HAMAP" id="MF_01416">
    <property type="entry name" value="ATP_synth_delta_bact"/>
    <property type="match status" value="1"/>
</dbReference>
<dbReference type="InterPro" id="IPR026015">
    <property type="entry name" value="ATP_synth_OSCP/delta_N_sf"/>
</dbReference>
<dbReference type="InterPro" id="IPR000711">
    <property type="entry name" value="ATPase_OSCP/dsu"/>
</dbReference>
<dbReference type="NCBIfam" id="TIGR01145">
    <property type="entry name" value="ATP_synt_delta"/>
    <property type="match status" value="1"/>
</dbReference>
<dbReference type="PANTHER" id="PTHR11910">
    <property type="entry name" value="ATP SYNTHASE DELTA CHAIN"/>
    <property type="match status" value="1"/>
</dbReference>
<dbReference type="Pfam" id="PF00213">
    <property type="entry name" value="OSCP"/>
    <property type="match status" value="1"/>
</dbReference>
<dbReference type="SUPFAM" id="SSF47928">
    <property type="entry name" value="N-terminal domain of the delta subunit of the F1F0-ATP synthase"/>
    <property type="match status" value="1"/>
</dbReference>
<reference key="1">
    <citation type="journal article" date="2009" name="J. Bacteriol.">
        <title>Complete and draft genome sequences of six members of the Aquificales.</title>
        <authorList>
            <person name="Reysenbach A.-L."/>
            <person name="Hamamura N."/>
            <person name="Podar M."/>
            <person name="Griffiths E."/>
            <person name="Ferreira S."/>
            <person name="Hochstein R."/>
            <person name="Heidelberg J."/>
            <person name="Johnson J."/>
            <person name="Mead D."/>
            <person name="Pohorille A."/>
            <person name="Sarmiento M."/>
            <person name="Schweighofer K."/>
            <person name="Seshadri R."/>
            <person name="Voytek M.A."/>
        </authorList>
    </citation>
    <scope>NUCLEOTIDE SEQUENCE [LARGE SCALE GENOMIC DNA]</scope>
    <source>
        <strain>Y04AAS1</strain>
    </source>
</reference>
<organism>
    <name type="scientific">Hydrogenobaculum sp. (strain Y04AAS1)</name>
    <dbReference type="NCBI Taxonomy" id="380749"/>
    <lineage>
        <taxon>Bacteria</taxon>
        <taxon>Pseudomonadati</taxon>
        <taxon>Aquificota</taxon>
        <taxon>Aquificia</taxon>
        <taxon>Aquificales</taxon>
        <taxon>Aquificaceae</taxon>
        <taxon>Hydrogenobaculum</taxon>
    </lineage>
</organism>
<feature type="chain" id="PRO_0000382104" description="ATP synthase subunit delta">
    <location>
        <begin position="1"/>
        <end position="182"/>
    </location>
</feature>
<keyword id="KW-0066">ATP synthesis</keyword>
<keyword id="KW-0997">Cell inner membrane</keyword>
<keyword id="KW-1003">Cell membrane</keyword>
<keyword id="KW-0139">CF(1)</keyword>
<keyword id="KW-0375">Hydrogen ion transport</keyword>
<keyword id="KW-0406">Ion transport</keyword>
<keyword id="KW-0472">Membrane</keyword>
<keyword id="KW-0813">Transport</keyword>
<accession>B4U990</accession>
<evidence type="ECO:0000255" key="1">
    <source>
        <dbReference type="HAMAP-Rule" id="MF_01416"/>
    </source>
</evidence>